<organism>
    <name type="scientific">Escherichia coli O8 (strain IAI1)</name>
    <dbReference type="NCBI Taxonomy" id="585034"/>
    <lineage>
        <taxon>Bacteria</taxon>
        <taxon>Pseudomonadati</taxon>
        <taxon>Pseudomonadota</taxon>
        <taxon>Gammaproteobacteria</taxon>
        <taxon>Enterobacterales</taxon>
        <taxon>Enterobacteriaceae</taxon>
        <taxon>Escherichia</taxon>
    </lineage>
</organism>
<dbReference type="EC" id="3.1.-.-" evidence="1"/>
<dbReference type="EMBL" id="CU928160">
    <property type="protein sequence ID" value="CAQ97513.1"/>
    <property type="molecule type" value="Genomic_DNA"/>
</dbReference>
<dbReference type="RefSeq" id="WP_000084469.1">
    <property type="nucleotide sequence ID" value="NC_011741.1"/>
</dbReference>
<dbReference type="SMR" id="B7M5I6"/>
<dbReference type="GeneID" id="93776823"/>
<dbReference type="KEGG" id="ecr:ECIAI1_0643"/>
<dbReference type="HOGENOM" id="CLU_106710_0_1_6"/>
<dbReference type="GO" id="GO:0005737">
    <property type="term" value="C:cytoplasm"/>
    <property type="evidence" value="ECO:0007669"/>
    <property type="project" value="UniProtKB-SubCell"/>
</dbReference>
<dbReference type="GO" id="GO:0004222">
    <property type="term" value="F:metalloendopeptidase activity"/>
    <property type="evidence" value="ECO:0007669"/>
    <property type="project" value="InterPro"/>
</dbReference>
<dbReference type="GO" id="GO:0004521">
    <property type="term" value="F:RNA endonuclease activity"/>
    <property type="evidence" value="ECO:0007669"/>
    <property type="project" value="UniProtKB-UniRule"/>
</dbReference>
<dbReference type="GO" id="GO:0008270">
    <property type="term" value="F:zinc ion binding"/>
    <property type="evidence" value="ECO:0007669"/>
    <property type="project" value="UniProtKB-UniRule"/>
</dbReference>
<dbReference type="GO" id="GO:0006364">
    <property type="term" value="P:rRNA processing"/>
    <property type="evidence" value="ECO:0007669"/>
    <property type="project" value="UniProtKB-UniRule"/>
</dbReference>
<dbReference type="FunFam" id="3.40.390.30:FF:000001">
    <property type="entry name" value="Endoribonuclease YbeY"/>
    <property type="match status" value="1"/>
</dbReference>
<dbReference type="Gene3D" id="3.40.390.30">
    <property type="entry name" value="Metalloproteases ('zincins'), catalytic domain"/>
    <property type="match status" value="1"/>
</dbReference>
<dbReference type="HAMAP" id="MF_00009">
    <property type="entry name" value="Endoribonucl_YbeY"/>
    <property type="match status" value="1"/>
</dbReference>
<dbReference type="InterPro" id="IPR023091">
    <property type="entry name" value="MetalPrtase_cat_dom_sf_prd"/>
</dbReference>
<dbReference type="InterPro" id="IPR002036">
    <property type="entry name" value="YbeY"/>
</dbReference>
<dbReference type="InterPro" id="IPR020549">
    <property type="entry name" value="YbeY_CS"/>
</dbReference>
<dbReference type="NCBIfam" id="TIGR00043">
    <property type="entry name" value="rRNA maturation RNase YbeY"/>
    <property type="match status" value="1"/>
</dbReference>
<dbReference type="PANTHER" id="PTHR46986">
    <property type="entry name" value="ENDORIBONUCLEASE YBEY, CHLOROPLASTIC"/>
    <property type="match status" value="1"/>
</dbReference>
<dbReference type="PANTHER" id="PTHR46986:SF1">
    <property type="entry name" value="ENDORIBONUCLEASE YBEY, CHLOROPLASTIC"/>
    <property type="match status" value="1"/>
</dbReference>
<dbReference type="Pfam" id="PF02130">
    <property type="entry name" value="YbeY"/>
    <property type="match status" value="1"/>
</dbReference>
<dbReference type="SUPFAM" id="SSF55486">
    <property type="entry name" value="Metalloproteases ('zincins'), catalytic domain"/>
    <property type="match status" value="1"/>
</dbReference>
<dbReference type="PROSITE" id="PS01306">
    <property type="entry name" value="UPF0054"/>
    <property type="match status" value="1"/>
</dbReference>
<comment type="function">
    <text evidence="1">Single strand-specific metallo-endoribonuclease involved in late-stage 70S ribosome quality control and in maturation of the 3' terminus of the 16S rRNA.</text>
</comment>
<comment type="cofactor">
    <cofactor evidence="1">
        <name>Zn(2+)</name>
        <dbReference type="ChEBI" id="CHEBI:29105"/>
    </cofactor>
    <text evidence="1">Binds 1 zinc ion.</text>
</comment>
<comment type="subcellular location">
    <subcellularLocation>
        <location evidence="1">Cytoplasm</location>
    </subcellularLocation>
</comment>
<comment type="similarity">
    <text evidence="1">Belongs to the endoribonuclease YbeY family.</text>
</comment>
<evidence type="ECO:0000255" key="1">
    <source>
        <dbReference type="HAMAP-Rule" id="MF_00009"/>
    </source>
</evidence>
<accession>B7M5I6</accession>
<feature type="chain" id="PRO_1000199976" description="Endoribonuclease YbeY">
    <location>
        <begin position="1"/>
        <end position="155"/>
    </location>
</feature>
<feature type="binding site" evidence="1">
    <location>
        <position position="114"/>
    </location>
    <ligand>
        <name>Zn(2+)</name>
        <dbReference type="ChEBI" id="CHEBI:29105"/>
        <note>catalytic</note>
    </ligand>
</feature>
<feature type="binding site" evidence="1">
    <location>
        <position position="118"/>
    </location>
    <ligand>
        <name>Zn(2+)</name>
        <dbReference type="ChEBI" id="CHEBI:29105"/>
        <note>catalytic</note>
    </ligand>
</feature>
<feature type="binding site" evidence="1">
    <location>
        <position position="124"/>
    </location>
    <ligand>
        <name>Zn(2+)</name>
        <dbReference type="ChEBI" id="CHEBI:29105"/>
        <note>catalytic</note>
    </ligand>
</feature>
<gene>
    <name evidence="1" type="primary">ybeY</name>
    <name type="ordered locus">ECIAI1_0643</name>
</gene>
<proteinExistence type="inferred from homology"/>
<reference key="1">
    <citation type="journal article" date="2009" name="PLoS Genet.">
        <title>Organised genome dynamics in the Escherichia coli species results in highly diverse adaptive paths.</title>
        <authorList>
            <person name="Touchon M."/>
            <person name="Hoede C."/>
            <person name="Tenaillon O."/>
            <person name="Barbe V."/>
            <person name="Baeriswyl S."/>
            <person name="Bidet P."/>
            <person name="Bingen E."/>
            <person name="Bonacorsi S."/>
            <person name="Bouchier C."/>
            <person name="Bouvet O."/>
            <person name="Calteau A."/>
            <person name="Chiapello H."/>
            <person name="Clermont O."/>
            <person name="Cruveiller S."/>
            <person name="Danchin A."/>
            <person name="Diard M."/>
            <person name="Dossat C."/>
            <person name="Karoui M.E."/>
            <person name="Frapy E."/>
            <person name="Garry L."/>
            <person name="Ghigo J.M."/>
            <person name="Gilles A.M."/>
            <person name="Johnson J."/>
            <person name="Le Bouguenec C."/>
            <person name="Lescat M."/>
            <person name="Mangenot S."/>
            <person name="Martinez-Jehanne V."/>
            <person name="Matic I."/>
            <person name="Nassif X."/>
            <person name="Oztas S."/>
            <person name="Petit M.A."/>
            <person name="Pichon C."/>
            <person name="Rouy Z."/>
            <person name="Ruf C.S."/>
            <person name="Schneider D."/>
            <person name="Tourret J."/>
            <person name="Vacherie B."/>
            <person name="Vallenet D."/>
            <person name="Medigue C."/>
            <person name="Rocha E.P.C."/>
            <person name="Denamur E."/>
        </authorList>
    </citation>
    <scope>NUCLEOTIDE SEQUENCE [LARGE SCALE GENOMIC DNA]</scope>
    <source>
        <strain>IAI1</strain>
    </source>
</reference>
<keyword id="KW-0963">Cytoplasm</keyword>
<keyword id="KW-0255">Endonuclease</keyword>
<keyword id="KW-0378">Hydrolase</keyword>
<keyword id="KW-0479">Metal-binding</keyword>
<keyword id="KW-0540">Nuclease</keyword>
<keyword id="KW-0690">Ribosome biogenesis</keyword>
<keyword id="KW-0698">rRNA processing</keyword>
<keyword id="KW-0862">Zinc</keyword>
<protein>
    <recommendedName>
        <fullName evidence="1">Endoribonuclease YbeY</fullName>
        <ecNumber evidence="1">3.1.-.-</ecNumber>
    </recommendedName>
</protein>
<name>YBEY_ECO8A</name>
<sequence>MSQVILDLQLACEDNSGLPEESQFQTWLNAVIPQFQEESEVTIRVVDTAESHSLNLTYRGKDKPTNVLSFPFEVPPGMEMSLLGDLVICRQVVEKEAQEQGKPLEAHWAHMVVHGSLHLLGYDHIEDDEAEEMEALETEIMLALGYEDPYIAEKE</sequence>